<gene>
    <name evidence="1" type="primary">rnhA</name>
    <name type="ordered locus">XC_3256</name>
</gene>
<dbReference type="EC" id="3.1.26.4" evidence="1"/>
<dbReference type="EMBL" id="CP000050">
    <property type="protein sequence ID" value="AAY50300.1"/>
    <property type="molecule type" value="Genomic_DNA"/>
</dbReference>
<dbReference type="RefSeq" id="WP_011036192.1">
    <property type="nucleotide sequence ID" value="NZ_CP155948.1"/>
</dbReference>
<dbReference type="SMR" id="Q4URM3"/>
<dbReference type="KEGG" id="xcb:XC_3256"/>
<dbReference type="HOGENOM" id="CLU_030894_6_0_6"/>
<dbReference type="Proteomes" id="UP000000420">
    <property type="component" value="Chromosome"/>
</dbReference>
<dbReference type="GO" id="GO:0005737">
    <property type="term" value="C:cytoplasm"/>
    <property type="evidence" value="ECO:0007669"/>
    <property type="project" value="UniProtKB-SubCell"/>
</dbReference>
<dbReference type="GO" id="GO:0000287">
    <property type="term" value="F:magnesium ion binding"/>
    <property type="evidence" value="ECO:0007669"/>
    <property type="project" value="UniProtKB-UniRule"/>
</dbReference>
<dbReference type="GO" id="GO:0003676">
    <property type="term" value="F:nucleic acid binding"/>
    <property type="evidence" value="ECO:0007669"/>
    <property type="project" value="InterPro"/>
</dbReference>
<dbReference type="GO" id="GO:0004523">
    <property type="term" value="F:RNA-DNA hybrid ribonuclease activity"/>
    <property type="evidence" value="ECO:0007669"/>
    <property type="project" value="UniProtKB-UniRule"/>
</dbReference>
<dbReference type="GO" id="GO:0043137">
    <property type="term" value="P:DNA replication, removal of RNA primer"/>
    <property type="evidence" value="ECO:0007669"/>
    <property type="project" value="TreeGrafter"/>
</dbReference>
<dbReference type="CDD" id="cd09278">
    <property type="entry name" value="RNase_HI_prokaryote_like"/>
    <property type="match status" value="1"/>
</dbReference>
<dbReference type="FunFam" id="3.30.420.10:FF:000008">
    <property type="entry name" value="Ribonuclease H"/>
    <property type="match status" value="1"/>
</dbReference>
<dbReference type="Gene3D" id="3.30.420.10">
    <property type="entry name" value="Ribonuclease H-like superfamily/Ribonuclease H"/>
    <property type="match status" value="1"/>
</dbReference>
<dbReference type="HAMAP" id="MF_00042">
    <property type="entry name" value="RNase_H"/>
    <property type="match status" value="1"/>
</dbReference>
<dbReference type="InterPro" id="IPR050092">
    <property type="entry name" value="RNase_H"/>
</dbReference>
<dbReference type="InterPro" id="IPR012337">
    <property type="entry name" value="RNaseH-like_sf"/>
</dbReference>
<dbReference type="InterPro" id="IPR002156">
    <property type="entry name" value="RNaseH_domain"/>
</dbReference>
<dbReference type="InterPro" id="IPR036397">
    <property type="entry name" value="RNaseH_sf"/>
</dbReference>
<dbReference type="InterPro" id="IPR022892">
    <property type="entry name" value="RNaseHI"/>
</dbReference>
<dbReference type="NCBIfam" id="NF001236">
    <property type="entry name" value="PRK00203.1"/>
    <property type="match status" value="1"/>
</dbReference>
<dbReference type="PANTHER" id="PTHR10642">
    <property type="entry name" value="RIBONUCLEASE H1"/>
    <property type="match status" value="1"/>
</dbReference>
<dbReference type="PANTHER" id="PTHR10642:SF26">
    <property type="entry name" value="RIBONUCLEASE H1"/>
    <property type="match status" value="1"/>
</dbReference>
<dbReference type="Pfam" id="PF00075">
    <property type="entry name" value="RNase_H"/>
    <property type="match status" value="1"/>
</dbReference>
<dbReference type="SUPFAM" id="SSF53098">
    <property type="entry name" value="Ribonuclease H-like"/>
    <property type="match status" value="1"/>
</dbReference>
<dbReference type="PROSITE" id="PS50879">
    <property type="entry name" value="RNASE_H_1"/>
    <property type="match status" value="1"/>
</dbReference>
<organism>
    <name type="scientific">Xanthomonas campestris pv. campestris (strain 8004)</name>
    <dbReference type="NCBI Taxonomy" id="314565"/>
    <lineage>
        <taxon>Bacteria</taxon>
        <taxon>Pseudomonadati</taxon>
        <taxon>Pseudomonadota</taxon>
        <taxon>Gammaproteobacteria</taxon>
        <taxon>Lysobacterales</taxon>
        <taxon>Lysobacteraceae</taxon>
        <taxon>Xanthomonas</taxon>
    </lineage>
</organism>
<sequence>MKSIEVHTDGSCLGNPGPGGWAALLRYNGREKELAGGEANSTNNRMELMAAIMALETLTEPCQILLHTDSQYVRQGITEWMPGWVRRGWKTSGGDPVKNRELWERLHAATQRHSIEWRWVKGHNGDPDNERVDVLARNQAIAQRGGLATS</sequence>
<name>RNH_XANC8</name>
<evidence type="ECO:0000255" key="1">
    <source>
        <dbReference type="HAMAP-Rule" id="MF_00042"/>
    </source>
</evidence>
<evidence type="ECO:0000255" key="2">
    <source>
        <dbReference type="PROSITE-ProRule" id="PRU00408"/>
    </source>
</evidence>
<feature type="chain" id="PRO_0000332689" description="Ribonuclease H">
    <location>
        <begin position="1"/>
        <end position="150"/>
    </location>
</feature>
<feature type="domain" description="RNase H type-1" evidence="2">
    <location>
        <begin position="1"/>
        <end position="141"/>
    </location>
</feature>
<feature type="binding site" evidence="1">
    <location>
        <position position="9"/>
    </location>
    <ligand>
        <name>Mg(2+)</name>
        <dbReference type="ChEBI" id="CHEBI:18420"/>
        <label>1</label>
    </ligand>
</feature>
<feature type="binding site" evidence="1">
    <location>
        <position position="9"/>
    </location>
    <ligand>
        <name>Mg(2+)</name>
        <dbReference type="ChEBI" id="CHEBI:18420"/>
        <label>2</label>
    </ligand>
</feature>
<feature type="binding site" evidence="1">
    <location>
        <position position="47"/>
    </location>
    <ligand>
        <name>Mg(2+)</name>
        <dbReference type="ChEBI" id="CHEBI:18420"/>
        <label>1</label>
    </ligand>
</feature>
<feature type="binding site" evidence="1">
    <location>
        <position position="69"/>
    </location>
    <ligand>
        <name>Mg(2+)</name>
        <dbReference type="ChEBI" id="CHEBI:18420"/>
        <label>1</label>
    </ligand>
</feature>
<feature type="binding site" evidence="1">
    <location>
        <position position="133"/>
    </location>
    <ligand>
        <name>Mg(2+)</name>
        <dbReference type="ChEBI" id="CHEBI:18420"/>
        <label>2</label>
    </ligand>
</feature>
<accession>Q4URM3</accession>
<protein>
    <recommendedName>
        <fullName evidence="1">Ribonuclease H</fullName>
        <shortName evidence="1">RNase H</shortName>
        <ecNumber evidence="1">3.1.26.4</ecNumber>
    </recommendedName>
</protein>
<proteinExistence type="inferred from homology"/>
<comment type="function">
    <text evidence="1">Endonuclease that specifically degrades the RNA of RNA-DNA hybrids.</text>
</comment>
<comment type="catalytic activity">
    <reaction evidence="1">
        <text>Endonucleolytic cleavage to 5'-phosphomonoester.</text>
        <dbReference type="EC" id="3.1.26.4"/>
    </reaction>
</comment>
<comment type="cofactor">
    <cofactor evidence="1">
        <name>Mg(2+)</name>
        <dbReference type="ChEBI" id="CHEBI:18420"/>
    </cofactor>
    <text evidence="1">Binds 1 Mg(2+) ion per subunit. May bind a second metal ion at a regulatory site, or after substrate binding.</text>
</comment>
<comment type="subunit">
    <text evidence="1">Monomer.</text>
</comment>
<comment type="subcellular location">
    <subcellularLocation>
        <location evidence="1">Cytoplasm</location>
    </subcellularLocation>
</comment>
<comment type="similarity">
    <text evidence="1">Belongs to the RNase H family.</text>
</comment>
<keyword id="KW-0963">Cytoplasm</keyword>
<keyword id="KW-0255">Endonuclease</keyword>
<keyword id="KW-0378">Hydrolase</keyword>
<keyword id="KW-0460">Magnesium</keyword>
<keyword id="KW-0479">Metal-binding</keyword>
<keyword id="KW-0540">Nuclease</keyword>
<reference key="1">
    <citation type="journal article" date="2005" name="Genome Res.">
        <title>Comparative and functional genomic analyses of the pathogenicity of phytopathogen Xanthomonas campestris pv. campestris.</title>
        <authorList>
            <person name="Qian W."/>
            <person name="Jia Y."/>
            <person name="Ren S.-X."/>
            <person name="He Y.-Q."/>
            <person name="Feng J.-X."/>
            <person name="Lu L.-F."/>
            <person name="Sun Q."/>
            <person name="Ying G."/>
            <person name="Tang D.-J."/>
            <person name="Tang H."/>
            <person name="Wu W."/>
            <person name="Hao P."/>
            <person name="Wang L."/>
            <person name="Jiang B.-L."/>
            <person name="Zeng S."/>
            <person name="Gu W.-Y."/>
            <person name="Lu G."/>
            <person name="Rong L."/>
            <person name="Tian Y."/>
            <person name="Yao Z."/>
            <person name="Fu G."/>
            <person name="Chen B."/>
            <person name="Fang R."/>
            <person name="Qiang B."/>
            <person name="Chen Z."/>
            <person name="Zhao G.-P."/>
            <person name="Tang J.-L."/>
            <person name="He C."/>
        </authorList>
    </citation>
    <scope>NUCLEOTIDE SEQUENCE [LARGE SCALE GENOMIC DNA]</scope>
    <source>
        <strain>8004</strain>
    </source>
</reference>